<name>BMP15_MOUSE</name>
<comment type="function">
    <text evidence="1">May be involved in follicular development. Oocyte-specific growth/differentiation factor that stimulates folliculogenesis and granulosa cell (GC) growth (By similarity).</text>
</comment>
<comment type="subunit">
    <text evidence="1">Homodimer (By similarity). But, in contrast to other members of this family, cannot be disulfide-linked.</text>
</comment>
<comment type="subcellular location">
    <subcellularLocation>
        <location>Secreted</location>
    </subcellularLocation>
</comment>
<comment type="tissue specificity">
    <text>Ovary specific.</text>
</comment>
<comment type="similarity">
    <text evidence="3">Belongs to the TGF-beta family.</text>
</comment>
<feature type="signal peptide" evidence="2">
    <location>
        <begin position="1"/>
        <end position="25"/>
    </location>
</feature>
<feature type="propeptide" id="PRO_0000033894" evidence="1">
    <location>
        <begin position="26"/>
        <end position="267"/>
    </location>
</feature>
<feature type="chain" id="PRO_0000033895" description="Bone morphogenetic protein 15">
    <location>
        <begin position="268"/>
        <end position="392"/>
    </location>
</feature>
<feature type="glycosylation site" description="N-linked (GlcNAc...) asparagine" evidence="2">
    <location>
        <position position="85"/>
    </location>
</feature>
<feature type="glycosylation site" description="N-linked (GlcNAc...) asparagine" evidence="2">
    <location>
        <position position="213"/>
    </location>
</feature>
<feature type="glycosylation site" description="N-linked (GlcNAc...) asparagine" evidence="2">
    <location>
        <position position="236"/>
    </location>
</feature>
<feature type="glycosylation site" description="N-linked (GlcNAc...) asparagine" evidence="2">
    <location>
        <position position="349"/>
    </location>
</feature>
<feature type="glycosylation site" description="N-linked (GlcNAc...) asparagine" evidence="2">
    <location>
        <position position="373"/>
    </location>
</feature>
<feature type="disulfide bond" evidence="1">
    <location>
        <begin position="291"/>
        <end position="357"/>
    </location>
</feature>
<feature type="disulfide bond" evidence="1">
    <location>
        <begin position="320"/>
        <end position="389"/>
    </location>
</feature>
<feature type="disulfide bond" evidence="1">
    <location>
        <begin position="324"/>
        <end position="391"/>
    </location>
</feature>
<keyword id="KW-0202">Cytokine</keyword>
<keyword id="KW-1015">Disulfide bond</keyword>
<keyword id="KW-0325">Glycoprotein</keyword>
<keyword id="KW-0339">Growth factor</keyword>
<keyword id="KW-1185">Reference proteome</keyword>
<keyword id="KW-0964">Secreted</keyword>
<keyword id="KW-0732">Signal</keyword>
<sequence>MALLTILRILLWGVVLFMEQRVQMAKPGWPSTALLADDPTLPSILDLAKEAPGKEMKQWPQGYPLRYMLKLYHRSADPHGHPRENRTIGAKMVRLVKPSANTVRPPRGSWHVQTLDFPLASNQVAYELIRATVVYRHQLHLVNYHLSCHVETWVPKCRTKHLPSSKSGSSKPSPMSKAWTEIDITHCIQQKLWNRKGRSVLRLRFMCQQQKGNETREFRWHGMTSLDVAFLLLYFNDTDDRVQGKLLARGQEELTDRESSFLMRSVRQACSIESDASCPSQEHDGSVNNQCSLHPYKVSFHQLGWDHWIIAPRLYTPNYCKGICTRVLPYGLNSPNHAIIQSLVNELVNHSVPQPSCVPYNFLPMSILLIETNGSILYKEYEGMIAQSCTCR</sequence>
<proteinExistence type="evidence at transcript level"/>
<protein>
    <recommendedName>
        <fullName>Bone morphogenetic protein 15</fullName>
        <shortName>BMP-15</shortName>
    </recommendedName>
    <alternativeName>
        <fullName>Growth/differentiation factor 9B</fullName>
        <shortName>GDF-9B</shortName>
    </alternativeName>
</protein>
<gene>
    <name type="primary">Bmp15</name>
    <name type="synonym">Gdf9b</name>
</gene>
<dbReference type="EMBL" id="AF082348">
    <property type="protein sequence ID" value="AAC99766.1"/>
    <property type="molecule type" value="mRNA"/>
</dbReference>
<dbReference type="EMBL" id="AJ010259">
    <property type="protein sequence ID" value="CAA09053.1"/>
    <property type="molecule type" value="mRNA"/>
</dbReference>
<dbReference type="EMBL" id="AJ132406">
    <property type="protein sequence ID" value="CAB40966.1"/>
    <property type="molecule type" value="mRNA"/>
</dbReference>
<dbReference type="EMBL" id="AK028735">
    <property type="protein sequence ID" value="BAC26090.1"/>
    <property type="molecule type" value="mRNA"/>
</dbReference>
<dbReference type="EMBL" id="AK135757">
    <property type="protein sequence ID" value="BAE22642.1"/>
    <property type="molecule type" value="mRNA"/>
</dbReference>
<dbReference type="EMBL" id="AK139773">
    <property type="protein sequence ID" value="BAE24134.1"/>
    <property type="molecule type" value="mRNA"/>
</dbReference>
<dbReference type="EMBL" id="BC055363">
    <property type="protein sequence ID" value="AAH55363.1"/>
    <property type="molecule type" value="mRNA"/>
</dbReference>
<dbReference type="CCDS" id="CCDS29958.1"/>
<dbReference type="RefSeq" id="NP_033887.1">
    <property type="nucleotide sequence ID" value="NM_009757.5"/>
</dbReference>
<dbReference type="FunCoup" id="Q9Z0L4">
    <property type="interactions" value="562"/>
</dbReference>
<dbReference type="STRING" id="10090.ENSMUSP00000024049"/>
<dbReference type="GlyCosmos" id="Q9Z0L4">
    <property type="glycosylation" value="5 sites, No reported glycans"/>
</dbReference>
<dbReference type="GlyGen" id="Q9Z0L4">
    <property type="glycosylation" value="5 sites"/>
</dbReference>
<dbReference type="iPTMnet" id="Q9Z0L4"/>
<dbReference type="PhosphoSitePlus" id="Q9Z0L4"/>
<dbReference type="PaxDb" id="10090-ENSMUSP00000024049"/>
<dbReference type="Antibodypedia" id="26314">
    <property type="antibodies" value="355 antibodies from 38 providers"/>
</dbReference>
<dbReference type="DNASU" id="12155"/>
<dbReference type="Ensembl" id="ENSMUST00000024049.8">
    <property type="protein sequence ID" value="ENSMUSP00000024049.8"/>
    <property type="gene ID" value="ENSMUSG00000023279.8"/>
</dbReference>
<dbReference type="GeneID" id="12155"/>
<dbReference type="KEGG" id="mmu:12155"/>
<dbReference type="UCSC" id="uc009skx.2">
    <property type="organism name" value="mouse"/>
</dbReference>
<dbReference type="AGR" id="MGI:1316745"/>
<dbReference type="CTD" id="9210"/>
<dbReference type="MGI" id="MGI:1316745">
    <property type="gene designation" value="Bmp15"/>
</dbReference>
<dbReference type="VEuPathDB" id="HostDB:ENSMUSG00000023279"/>
<dbReference type="eggNOG" id="KOG3900">
    <property type="taxonomic scope" value="Eukaryota"/>
</dbReference>
<dbReference type="GeneTree" id="ENSGT00940000160940"/>
<dbReference type="HOGENOM" id="CLU_055377_0_0_1"/>
<dbReference type="InParanoid" id="Q9Z0L4"/>
<dbReference type="OMA" id="VYRHQLH"/>
<dbReference type="OrthoDB" id="6427922at2759"/>
<dbReference type="PhylomeDB" id="Q9Z0L4"/>
<dbReference type="TreeFam" id="TF316134"/>
<dbReference type="Reactome" id="R-MMU-381426">
    <property type="pathway name" value="Regulation of Insulin-like Growth Factor (IGF) transport and uptake by Insulin-like Growth Factor Binding Proteins (IGFBPs)"/>
</dbReference>
<dbReference type="Reactome" id="R-MMU-8957275">
    <property type="pathway name" value="Post-translational protein phosphorylation"/>
</dbReference>
<dbReference type="BioGRID-ORCS" id="12155">
    <property type="hits" value="2 hits in 76 CRISPR screens"/>
</dbReference>
<dbReference type="PRO" id="PR:Q9Z0L4"/>
<dbReference type="Proteomes" id="UP000000589">
    <property type="component" value="Chromosome X"/>
</dbReference>
<dbReference type="RNAct" id="Q9Z0L4">
    <property type="molecule type" value="protein"/>
</dbReference>
<dbReference type="Bgee" id="ENSMUSG00000023279">
    <property type="expression patterns" value="Expressed in secondary oocyte and 40 other cell types or tissues"/>
</dbReference>
<dbReference type="GO" id="GO:0005737">
    <property type="term" value="C:cytoplasm"/>
    <property type="evidence" value="ECO:0000314"/>
    <property type="project" value="MGI"/>
</dbReference>
<dbReference type="GO" id="GO:0005615">
    <property type="term" value="C:extracellular space"/>
    <property type="evidence" value="ECO:0007669"/>
    <property type="project" value="UniProtKB-KW"/>
</dbReference>
<dbReference type="GO" id="GO:0005125">
    <property type="term" value="F:cytokine activity"/>
    <property type="evidence" value="ECO:0007669"/>
    <property type="project" value="UniProtKB-KW"/>
</dbReference>
<dbReference type="GO" id="GO:0008083">
    <property type="term" value="F:growth factor activity"/>
    <property type="evidence" value="ECO:0007669"/>
    <property type="project" value="UniProtKB-KW"/>
</dbReference>
<dbReference type="GO" id="GO:0045893">
    <property type="term" value="P:positive regulation of DNA-templated transcription"/>
    <property type="evidence" value="ECO:0007669"/>
    <property type="project" value="Ensembl"/>
</dbReference>
<dbReference type="FunFam" id="2.10.90.10:FF:000012">
    <property type="entry name" value="Growth/differentiation factor 9 (Predicted)"/>
    <property type="match status" value="1"/>
</dbReference>
<dbReference type="Gene3D" id="2.10.90.10">
    <property type="entry name" value="Cystine-knot cytokines"/>
    <property type="match status" value="1"/>
</dbReference>
<dbReference type="InterPro" id="IPR029034">
    <property type="entry name" value="Cystine-knot_cytokine"/>
</dbReference>
<dbReference type="InterPro" id="IPR001839">
    <property type="entry name" value="TGF-b_C"/>
</dbReference>
<dbReference type="InterPro" id="IPR015615">
    <property type="entry name" value="TGF-beta-rel"/>
</dbReference>
<dbReference type="InterPro" id="IPR017948">
    <property type="entry name" value="TGFb_CS"/>
</dbReference>
<dbReference type="PANTHER" id="PTHR11848:SF22">
    <property type="entry name" value="BONE MORPHOGENETIC PROTEIN 15"/>
    <property type="match status" value="1"/>
</dbReference>
<dbReference type="PANTHER" id="PTHR11848">
    <property type="entry name" value="TGF-BETA FAMILY"/>
    <property type="match status" value="1"/>
</dbReference>
<dbReference type="Pfam" id="PF00019">
    <property type="entry name" value="TGF_beta"/>
    <property type="match status" value="1"/>
</dbReference>
<dbReference type="PRINTS" id="PR00669">
    <property type="entry name" value="INHIBINA"/>
</dbReference>
<dbReference type="SMART" id="SM00204">
    <property type="entry name" value="TGFB"/>
    <property type="match status" value="1"/>
</dbReference>
<dbReference type="SUPFAM" id="SSF57501">
    <property type="entry name" value="Cystine-knot cytokines"/>
    <property type="match status" value="1"/>
</dbReference>
<dbReference type="PROSITE" id="PS00250">
    <property type="entry name" value="TGF_BETA_1"/>
    <property type="match status" value="1"/>
</dbReference>
<dbReference type="PROSITE" id="PS51362">
    <property type="entry name" value="TGF_BETA_2"/>
    <property type="match status" value="1"/>
</dbReference>
<evidence type="ECO:0000250" key="1"/>
<evidence type="ECO:0000255" key="2"/>
<evidence type="ECO:0000305" key="3"/>
<accession>Q9Z0L4</accession>
<accession>Q3UT46</accession>
<organism>
    <name type="scientific">Mus musculus</name>
    <name type="common">Mouse</name>
    <dbReference type="NCBI Taxonomy" id="10090"/>
    <lineage>
        <taxon>Eukaryota</taxon>
        <taxon>Metazoa</taxon>
        <taxon>Chordata</taxon>
        <taxon>Craniata</taxon>
        <taxon>Vertebrata</taxon>
        <taxon>Euteleostomi</taxon>
        <taxon>Mammalia</taxon>
        <taxon>Eutheria</taxon>
        <taxon>Euarchontoglires</taxon>
        <taxon>Glires</taxon>
        <taxon>Rodentia</taxon>
        <taxon>Myomorpha</taxon>
        <taxon>Muroidea</taxon>
        <taxon>Muridae</taxon>
        <taxon>Murinae</taxon>
        <taxon>Mus</taxon>
        <taxon>Mus</taxon>
    </lineage>
</organism>
<reference key="1">
    <citation type="journal article" date="1998" name="Mol. Endocrinol.">
        <title>The bone morphogenetic protein 15 gene is X-linked and expressed in oocytes.</title>
        <authorList>
            <person name="Dube J.L."/>
            <person name="Wang P."/>
            <person name="Elvin J."/>
            <person name="Lyons K.M."/>
            <person name="Celeste A.J."/>
            <person name="Matzuk M.M."/>
        </authorList>
    </citation>
    <scope>NUCLEOTIDE SEQUENCE [MRNA]</scope>
    <source>
        <strain>C57BL/6 X 129/Sv</strain>
        <tissue>Ovary</tissue>
    </source>
</reference>
<reference key="2">
    <citation type="journal article" date="1998" name="Mech. Dev.">
        <title>A novel growth differentiation factor-9 (GDF-9) related factor is co-expressed with GDF-9 in mouse oocytes during folliculogenesis.</title>
        <authorList>
            <person name="Laitinen M."/>
            <person name="Vuojolainen K."/>
            <person name="Jaatinen R."/>
            <person name="Ketola I."/>
            <person name="Aaltonen J."/>
            <person name="Lehtonen E."/>
            <person name="Heikinheimo M."/>
            <person name="Ritvos O."/>
        </authorList>
    </citation>
    <scope>NUCLEOTIDE SEQUENCE [MRNA] OF 139-392</scope>
    <source>
        <strain>NMRI</strain>
        <tissue>Ovary</tissue>
    </source>
</reference>
<reference key="3">
    <citation type="journal article" date="1999" name="Mol. Cell. Endocrinol.">
        <title>Localization of growth differentiation factor-9 (GDF-9) mRNA and protein in rat ovaries and cDNA cloning of rat GDF-9 and its novel homolog GDF-9B.</title>
        <authorList>
            <person name="Jaatinen R."/>
            <person name="Laitinen M.P."/>
            <person name="Vuojolainen K."/>
            <person name="Aaltonen J."/>
            <person name="Louhio H."/>
            <person name="Heikinheimo K."/>
            <person name="Lehtonen E."/>
            <person name="Ritvos O."/>
        </authorList>
    </citation>
    <scope>NUCLEOTIDE SEQUENCE [MRNA]</scope>
    <source>
        <strain>NMRI</strain>
        <tissue>Ovary</tissue>
    </source>
</reference>
<reference key="4">
    <citation type="journal article" date="2005" name="Science">
        <title>The transcriptional landscape of the mammalian genome.</title>
        <authorList>
            <person name="Carninci P."/>
            <person name="Kasukawa T."/>
            <person name="Katayama S."/>
            <person name="Gough J."/>
            <person name="Frith M.C."/>
            <person name="Maeda N."/>
            <person name="Oyama R."/>
            <person name="Ravasi T."/>
            <person name="Lenhard B."/>
            <person name="Wells C."/>
            <person name="Kodzius R."/>
            <person name="Shimokawa K."/>
            <person name="Bajic V.B."/>
            <person name="Brenner S.E."/>
            <person name="Batalov S."/>
            <person name="Forrest A.R."/>
            <person name="Zavolan M."/>
            <person name="Davis M.J."/>
            <person name="Wilming L.G."/>
            <person name="Aidinis V."/>
            <person name="Allen J.E."/>
            <person name="Ambesi-Impiombato A."/>
            <person name="Apweiler R."/>
            <person name="Aturaliya R.N."/>
            <person name="Bailey T.L."/>
            <person name="Bansal M."/>
            <person name="Baxter L."/>
            <person name="Beisel K.W."/>
            <person name="Bersano T."/>
            <person name="Bono H."/>
            <person name="Chalk A.M."/>
            <person name="Chiu K.P."/>
            <person name="Choudhary V."/>
            <person name="Christoffels A."/>
            <person name="Clutterbuck D.R."/>
            <person name="Crowe M.L."/>
            <person name="Dalla E."/>
            <person name="Dalrymple B.P."/>
            <person name="de Bono B."/>
            <person name="Della Gatta G."/>
            <person name="di Bernardo D."/>
            <person name="Down T."/>
            <person name="Engstrom P."/>
            <person name="Fagiolini M."/>
            <person name="Faulkner G."/>
            <person name="Fletcher C.F."/>
            <person name="Fukushima T."/>
            <person name="Furuno M."/>
            <person name="Futaki S."/>
            <person name="Gariboldi M."/>
            <person name="Georgii-Hemming P."/>
            <person name="Gingeras T.R."/>
            <person name="Gojobori T."/>
            <person name="Green R.E."/>
            <person name="Gustincich S."/>
            <person name="Harbers M."/>
            <person name="Hayashi Y."/>
            <person name="Hensch T.K."/>
            <person name="Hirokawa N."/>
            <person name="Hill D."/>
            <person name="Huminiecki L."/>
            <person name="Iacono M."/>
            <person name="Ikeo K."/>
            <person name="Iwama A."/>
            <person name="Ishikawa T."/>
            <person name="Jakt M."/>
            <person name="Kanapin A."/>
            <person name="Katoh M."/>
            <person name="Kawasawa Y."/>
            <person name="Kelso J."/>
            <person name="Kitamura H."/>
            <person name="Kitano H."/>
            <person name="Kollias G."/>
            <person name="Krishnan S.P."/>
            <person name="Kruger A."/>
            <person name="Kummerfeld S.K."/>
            <person name="Kurochkin I.V."/>
            <person name="Lareau L.F."/>
            <person name="Lazarevic D."/>
            <person name="Lipovich L."/>
            <person name="Liu J."/>
            <person name="Liuni S."/>
            <person name="McWilliam S."/>
            <person name="Madan Babu M."/>
            <person name="Madera M."/>
            <person name="Marchionni L."/>
            <person name="Matsuda H."/>
            <person name="Matsuzawa S."/>
            <person name="Miki H."/>
            <person name="Mignone F."/>
            <person name="Miyake S."/>
            <person name="Morris K."/>
            <person name="Mottagui-Tabar S."/>
            <person name="Mulder N."/>
            <person name="Nakano N."/>
            <person name="Nakauchi H."/>
            <person name="Ng P."/>
            <person name="Nilsson R."/>
            <person name="Nishiguchi S."/>
            <person name="Nishikawa S."/>
            <person name="Nori F."/>
            <person name="Ohara O."/>
            <person name="Okazaki Y."/>
            <person name="Orlando V."/>
            <person name="Pang K.C."/>
            <person name="Pavan W.J."/>
            <person name="Pavesi G."/>
            <person name="Pesole G."/>
            <person name="Petrovsky N."/>
            <person name="Piazza S."/>
            <person name="Reed J."/>
            <person name="Reid J.F."/>
            <person name="Ring B.Z."/>
            <person name="Ringwald M."/>
            <person name="Rost B."/>
            <person name="Ruan Y."/>
            <person name="Salzberg S.L."/>
            <person name="Sandelin A."/>
            <person name="Schneider C."/>
            <person name="Schoenbach C."/>
            <person name="Sekiguchi K."/>
            <person name="Semple C.A."/>
            <person name="Seno S."/>
            <person name="Sessa L."/>
            <person name="Sheng Y."/>
            <person name="Shibata Y."/>
            <person name="Shimada H."/>
            <person name="Shimada K."/>
            <person name="Silva D."/>
            <person name="Sinclair B."/>
            <person name="Sperling S."/>
            <person name="Stupka E."/>
            <person name="Sugiura K."/>
            <person name="Sultana R."/>
            <person name="Takenaka Y."/>
            <person name="Taki K."/>
            <person name="Tammoja K."/>
            <person name="Tan S.L."/>
            <person name="Tang S."/>
            <person name="Taylor M.S."/>
            <person name="Tegner J."/>
            <person name="Teichmann S.A."/>
            <person name="Ueda H.R."/>
            <person name="van Nimwegen E."/>
            <person name="Verardo R."/>
            <person name="Wei C.L."/>
            <person name="Yagi K."/>
            <person name="Yamanishi H."/>
            <person name="Zabarovsky E."/>
            <person name="Zhu S."/>
            <person name="Zimmer A."/>
            <person name="Hide W."/>
            <person name="Bult C."/>
            <person name="Grimmond S.M."/>
            <person name="Teasdale R.D."/>
            <person name="Liu E.T."/>
            <person name="Brusic V."/>
            <person name="Quackenbush J."/>
            <person name="Wahlestedt C."/>
            <person name="Mattick J.S."/>
            <person name="Hume D.A."/>
            <person name="Kai C."/>
            <person name="Sasaki D."/>
            <person name="Tomaru Y."/>
            <person name="Fukuda S."/>
            <person name="Kanamori-Katayama M."/>
            <person name="Suzuki M."/>
            <person name="Aoki J."/>
            <person name="Arakawa T."/>
            <person name="Iida J."/>
            <person name="Imamura K."/>
            <person name="Itoh M."/>
            <person name="Kato T."/>
            <person name="Kawaji H."/>
            <person name="Kawagashira N."/>
            <person name="Kawashima T."/>
            <person name="Kojima M."/>
            <person name="Kondo S."/>
            <person name="Konno H."/>
            <person name="Nakano K."/>
            <person name="Ninomiya N."/>
            <person name="Nishio T."/>
            <person name="Okada M."/>
            <person name="Plessy C."/>
            <person name="Shibata K."/>
            <person name="Shiraki T."/>
            <person name="Suzuki S."/>
            <person name="Tagami M."/>
            <person name="Waki K."/>
            <person name="Watahiki A."/>
            <person name="Okamura-Oho Y."/>
            <person name="Suzuki H."/>
            <person name="Kawai J."/>
            <person name="Hayashizaki Y."/>
        </authorList>
    </citation>
    <scope>NUCLEOTIDE SEQUENCE [LARGE SCALE MRNA]</scope>
    <source>
        <strain>C57BL/6J</strain>
        <tissue>Egg</tissue>
        <tissue>Skin</tissue>
    </source>
</reference>
<reference key="5">
    <citation type="journal article" date="2004" name="Genome Res.">
        <title>The status, quality, and expansion of the NIH full-length cDNA project: the Mammalian Gene Collection (MGC).</title>
        <authorList>
            <consortium name="The MGC Project Team"/>
        </authorList>
    </citation>
    <scope>NUCLEOTIDE SEQUENCE [LARGE SCALE MRNA]</scope>
    <source>
        <strain>C57BL/6J</strain>
        <tissue>Egg</tissue>
    </source>
</reference>